<sequence length="356" mass="41447">MKRDLLLTKIEEYKNIMPWYVLDYYQSKLSVPYSFTTLYEYLKEYKRFFEWLIDSDLSKAARIADVDLTTLEHLSKKDMEAFILYLRERPSLNTYSTKKGVSQTTINRTLSALSSLYKYLTEEVENEHGEPYFYRNVMKKVATKKKRETLAARAENIKQKLFLGDETMAFLDYVDKEYEYKLSNRAKASFRKNKERDLAIIALLLASGIRLSEAVNLDLKDVNLNMMLVEVTRKGGKRDSVNVAAFAKPHLEAYLSVRKDRYQAEKQDVAFFLTAYRGLPNRIDASSIEKMVGKYSESFKIRVTPHKLRHTLATRLYDTTKSQVLVSHQLGHASTQVTDLYTHIVNDEQKNALDKL</sequence>
<keyword id="KW-0131">Cell cycle</keyword>
<keyword id="KW-0132">Cell division</keyword>
<keyword id="KW-0159">Chromosome partition</keyword>
<keyword id="KW-0963">Cytoplasm</keyword>
<keyword id="KW-0229">DNA integration</keyword>
<keyword id="KW-0233">DNA recombination</keyword>
<keyword id="KW-0238">DNA-binding</keyword>
<gene>
    <name evidence="1" type="primary">xerS</name>
    <name type="ordered locus">Sez_1006</name>
</gene>
<name>XERS_STREM</name>
<organism>
    <name type="scientific">Streptococcus equi subsp. zooepidemicus (strain MGCS10565)</name>
    <dbReference type="NCBI Taxonomy" id="552526"/>
    <lineage>
        <taxon>Bacteria</taxon>
        <taxon>Bacillati</taxon>
        <taxon>Bacillota</taxon>
        <taxon>Bacilli</taxon>
        <taxon>Lactobacillales</taxon>
        <taxon>Streptococcaceae</taxon>
        <taxon>Streptococcus</taxon>
    </lineage>
</organism>
<protein>
    <recommendedName>
        <fullName evidence="1">Tyrosine recombinase XerS</fullName>
    </recommendedName>
</protein>
<dbReference type="EMBL" id="CP001129">
    <property type="protein sequence ID" value="ACG62360.1"/>
    <property type="molecule type" value="Genomic_DNA"/>
</dbReference>
<dbReference type="RefSeq" id="WP_012515628.1">
    <property type="nucleotide sequence ID" value="NC_011134.1"/>
</dbReference>
<dbReference type="SMR" id="B4U2Z3"/>
<dbReference type="KEGG" id="sez:Sez_1006"/>
<dbReference type="HOGENOM" id="CLU_027562_9_6_9"/>
<dbReference type="Proteomes" id="UP000001873">
    <property type="component" value="Chromosome"/>
</dbReference>
<dbReference type="GO" id="GO:0005737">
    <property type="term" value="C:cytoplasm"/>
    <property type="evidence" value="ECO:0007669"/>
    <property type="project" value="UniProtKB-SubCell"/>
</dbReference>
<dbReference type="GO" id="GO:0003677">
    <property type="term" value="F:DNA binding"/>
    <property type="evidence" value="ECO:0007669"/>
    <property type="project" value="UniProtKB-KW"/>
</dbReference>
<dbReference type="GO" id="GO:0009037">
    <property type="term" value="F:tyrosine-based site-specific recombinase activity"/>
    <property type="evidence" value="ECO:0007669"/>
    <property type="project" value="UniProtKB-UniRule"/>
</dbReference>
<dbReference type="GO" id="GO:0051301">
    <property type="term" value="P:cell division"/>
    <property type="evidence" value="ECO:0007669"/>
    <property type="project" value="UniProtKB-KW"/>
</dbReference>
<dbReference type="GO" id="GO:0007059">
    <property type="term" value="P:chromosome segregation"/>
    <property type="evidence" value="ECO:0007669"/>
    <property type="project" value="UniProtKB-UniRule"/>
</dbReference>
<dbReference type="GO" id="GO:0006310">
    <property type="term" value="P:DNA recombination"/>
    <property type="evidence" value="ECO:0007669"/>
    <property type="project" value="UniProtKB-UniRule"/>
</dbReference>
<dbReference type="Gene3D" id="1.10.150.130">
    <property type="match status" value="1"/>
</dbReference>
<dbReference type="Gene3D" id="1.10.443.10">
    <property type="entry name" value="Intergrase catalytic core"/>
    <property type="match status" value="1"/>
</dbReference>
<dbReference type="HAMAP" id="MF_01816">
    <property type="entry name" value="Recomb_XerS"/>
    <property type="match status" value="1"/>
</dbReference>
<dbReference type="InterPro" id="IPR044068">
    <property type="entry name" value="CB"/>
</dbReference>
<dbReference type="InterPro" id="IPR011010">
    <property type="entry name" value="DNA_brk_join_enz"/>
</dbReference>
<dbReference type="InterPro" id="IPR013762">
    <property type="entry name" value="Integrase-like_cat_sf"/>
</dbReference>
<dbReference type="InterPro" id="IPR002104">
    <property type="entry name" value="Integrase_catalytic"/>
</dbReference>
<dbReference type="InterPro" id="IPR010998">
    <property type="entry name" value="Integrase_recombinase_N"/>
</dbReference>
<dbReference type="InterPro" id="IPR004107">
    <property type="entry name" value="Integrase_SAM-like_N"/>
</dbReference>
<dbReference type="InterPro" id="IPR023670">
    <property type="entry name" value="Recomb_XerS"/>
</dbReference>
<dbReference type="InterPro" id="IPR050090">
    <property type="entry name" value="Tyrosine_recombinase_XerCD"/>
</dbReference>
<dbReference type="NCBIfam" id="NF003462">
    <property type="entry name" value="PRK05084.1"/>
    <property type="match status" value="1"/>
</dbReference>
<dbReference type="PANTHER" id="PTHR30349">
    <property type="entry name" value="PHAGE INTEGRASE-RELATED"/>
    <property type="match status" value="1"/>
</dbReference>
<dbReference type="PANTHER" id="PTHR30349:SF77">
    <property type="entry name" value="TYROSINE RECOMBINASE XERC"/>
    <property type="match status" value="1"/>
</dbReference>
<dbReference type="Pfam" id="PF02899">
    <property type="entry name" value="Phage_int_SAM_1"/>
    <property type="match status" value="1"/>
</dbReference>
<dbReference type="Pfam" id="PF00589">
    <property type="entry name" value="Phage_integrase"/>
    <property type="match status" value="1"/>
</dbReference>
<dbReference type="SUPFAM" id="SSF56349">
    <property type="entry name" value="DNA breaking-rejoining enzymes"/>
    <property type="match status" value="1"/>
</dbReference>
<dbReference type="PROSITE" id="PS51900">
    <property type="entry name" value="CB"/>
    <property type="match status" value="1"/>
</dbReference>
<dbReference type="PROSITE" id="PS51898">
    <property type="entry name" value="TYR_RECOMBINASE"/>
    <property type="match status" value="1"/>
</dbReference>
<comment type="function">
    <text evidence="1">Site-specific tyrosine recombinase, which acts by catalyzing the cutting and rejoining of the recombining DNA molecules. Essential to convert dimers of the bacterial chromosome into monomers to permit their segregation at cell division.</text>
</comment>
<comment type="activity regulation">
    <text evidence="1">FtsK is required for recombination.</text>
</comment>
<comment type="subcellular location">
    <subcellularLocation>
        <location evidence="1">Cytoplasm</location>
    </subcellularLocation>
</comment>
<comment type="similarity">
    <text evidence="1">Belongs to the 'phage' integrase family. XerS subfamily.</text>
</comment>
<accession>B4U2Z3</accession>
<proteinExistence type="inferred from homology"/>
<evidence type="ECO:0000255" key="1">
    <source>
        <dbReference type="HAMAP-Rule" id="MF_01816"/>
    </source>
</evidence>
<evidence type="ECO:0000255" key="2">
    <source>
        <dbReference type="PROSITE-ProRule" id="PRU01246"/>
    </source>
</evidence>
<evidence type="ECO:0000255" key="3">
    <source>
        <dbReference type="PROSITE-ProRule" id="PRU01248"/>
    </source>
</evidence>
<feature type="chain" id="PRO_1000187912" description="Tyrosine recombinase XerS">
    <location>
        <begin position="1"/>
        <end position="356"/>
    </location>
</feature>
<feature type="domain" description="Core-binding (CB)" evidence="3">
    <location>
        <begin position="16"/>
        <end position="121"/>
    </location>
</feature>
<feature type="domain" description="Tyr recombinase" evidence="2">
    <location>
        <begin position="169"/>
        <end position="354"/>
    </location>
</feature>
<feature type="active site" evidence="1">
    <location>
        <position position="210"/>
    </location>
</feature>
<feature type="active site" evidence="1">
    <location>
        <position position="234"/>
    </location>
</feature>
<feature type="active site" evidence="1">
    <location>
        <position position="306"/>
    </location>
</feature>
<feature type="active site" evidence="1">
    <location>
        <position position="309"/>
    </location>
</feature>
<feature type="active site" evidence="1">
    <location>
        <position position="332"/>
    </location>
</feature>
<feature type="active site" description="O-(3'-phospho-DNA)-tyrosine intermediate" evidence="1">
    <location>
        <position position="341"/>
    </location>
</feature>
<reference key="1">
    <citation type="journal article" date="2008" name="PLoS ONE">
        <title>Genome sequence of a lancefield group C Streptococcus zooepidemicus strain causing epidemic nephritis: new information about an old disease.</title>
        <authorList>
            <person name="Beres S.B."/>
            <person name="Sesso R."/>
            <person name="Pinto S.W.L."/>
            <person name="Hoe N.P."/>
            <person name="Porcella S.F."/>
            <person name="Deleo F.R."/>
            <person name="Musser J.M."/>
        </authorList>
    </citation>
    <scope>NUCLEOTIDE SEQUENCE [LARGE SCALE GENOMIC DNA]</scope>
    <source>
        <strain>MGCS10565</strain>
    </source>
</reference>